<proteinExistence type="inferred from homology"/>
<sequence>MAARAPAARTLLCPAFRRTHSHDPADRQSPVPFRRLWPPCPRPRRGLPAATTSRSPSSRPTPQLHIALPTRRAGRHAPDLAALFEAVGVRHVPGVVTTIHADAARWTSPHRRRPVHPALRPLRPGRRSRLFTPPIPGLAEHAFNVDAGGVTTSTGERIRPPPSSGRGAAANPVGAADSPASMTVRARSADPFLAGDRHATASSSTGDVALAARRPRQRCRHVPASTL</sequence>
<feature type="chain" id="PRO_0000096833" description="Protein NifY">
    <location>
        <begin position="1"/>
        <end position="227"/>
    </location>
</feature>
<feature type="region of interest" description="Disordered" evidence="1">
    <location>
        <begin position="19"/>
        <end position="63"/>
    </location>
</feature>
<feature type="region of interest" description="Disordered" evidence="1">
    <location>
        <begin position="107"/>
        <end position="128"/>
    </location>
</feature>
<feature type="region of interest" description="Disordered" evidence="1">
    <location>
        <begin position="150"/>
        <end position="227"/>
    </location>
</feature>
<feature type="compositionally biased region" description="Low complexity" evidence="1">
    <location>
        <begin position="48"/>
        <end position="62"/>
    </location>
</feature>
<organism>
    <name type="scientific">Azospirillum brasilense</name>
    <dbReference type="NCBI Taxonomy" id="192"/>
    <lineage>
        <taxon>Bacteria</taxon>
        <taxon>Pseudomonadati</taxon>
        <taxon>Pseudomonadota</taxon>
        <taxon>Alphaproteobacteria</taxon>
        <taxon>Rhodospirillales</taxon>
        <taxon>Azospirillaceae</taxon>
        <taxon>Azospirillum</taxon>
    </lineage>
</organism>
<name>NIFY_AZOBR</name>
<dbReference type="EMBL" id="M64344">
    <property type="protein sequence ID" value="AAB02346.1"/>
    <property type="molecule type" value="Genomic_DNA"/>
</dbReference>
<dbReference type="PIR" id="S27477">
    <property type="entry name" value="S27477"/>
</dbReference>
<dbReference type="GO" id="GO:0009399">
    <property type="term" value="P:nitrogen fixation"/>
    <property type="evidence" value="ECO:0007669"/>
    <property type="project" value="UniProtKB-KW"/>
</dbReference>
<evidence type="ECO:0000256" key="1">
    <source>
        <dbReference type="SAM" id="MobiDB-lite"/>
    </source>
</evidence>
<evidence type="ECO:0000305" key="2"/>
<reference key="1">
    <citation type="journal article" date="1991" name="Braz. J. Med. Biol. Res.">
        <title>The nifHDK operon in the free-living nitrogen-fixing bacteria Azospirillum brasilense sequentially comprises genes H, D, K, an 353 bp orf and gene Y.</title>
        <authorList>
            <person name="Passaglia L.M.P."/>
            <person name="Nunes C.P."/>
            <person name="Zaha A."/>
            <person name="Schrank I.S."/>
        </authorList>
    </citation>
    <scope>NUCLEOTIDE SEQUENCE [GENOMIC DNA]</scope>
</reference>
<protein>
    <recommendedName>
        <fullName>Protein NifY</fullName>
    </recommendedName>
</protein>
<gene>
    <name type="primary">nifY</name>
</gene>
<keyword id="KW-0535">Nitrogen fixation</keyword>
<comment type="similarity">
    <text evidence="2">Belongs to the NifX/NifY family.</text>
</comment>
<accession>P25315</accession>